<keyword id="KW-0520">NAD</keyword>
<keyword id="KW-0521">NADP</keyword>
<keyword id="KW-0560">Oxidoreductase</keyword>
<accession>Q73CR9</accession>
<gene>
    <name evidence="4" type="ordered locus">BCE_0995</name>
</gene>
<protein>
    <recommendedName>
        <fullName>Delta(1)-pyrroline-2-carboxylate reductase</fullName>
        <shortName>Pyr2C reductase</shortName>
        <ecNumber evidence="1">1.5.1.49</ecNumber>
    </recommendedName>
    <alternativeName>
        <fullName evidence="2">Proline ketimine reductase</fullName>
    </alternativeName>
</protein>
<dbReference type="EC" id="1.5.1.49" evidence="1"/>
<dbReference type="EMBL" id="AE017194">
    <property type="protein sequence ID" value="AAS39926.1"/>
    <property type="molecule type" value="Genomic_DNA"/>
</dbReference>
<dbReference type="SMR" id="Q73CR9"/>
<dbReference type="KEGG" id="bca:BCE_0995"/>
<dbReference type="HOGENOM" id="CLU_042088_1_0_9"/>
<dbReference type="SABIO-RK" id="Q73CR9"/>
<dbReference type="Proteomes" id="UP000002527">
    <property type="component" value="Chromosome"/>
</dbReference>
<dbReference type="GO" id="GO:0005737">
    <property type="term" value="C:cytoplasm"/>
    <property type="evidence" value="ECO:0007669"/>
    <property type="project" value="TreeGrafter"/>
</dbReference>
<dbReference type="GO" id="GO:0016491">
    <property type="term" value="F:oxidoreductase activity"/>
    <property type="evidence" value="ECO:0007669"/>
    <property type="project" value="UniProtKB-KW"/>
</dbReference>
<dbReference type="FunFam" id="3.30.1780.10:FF:000002">
    <property type="entry name" value="Ornithine cyclodeaminase"/>
    <property type="match status" value="1"/>
</dbReference>
<dbReference type="FunFam" id="3.40.50.720:FF:000311">
    <property type="entry name" value="Ornithine cyclodeaminase"/>
    <property type="match status" value="1"/>
</dbReference>
<dbReference type="Gene3D" id="3.40.50.720">
    <property type="entry name" value="NAD(P)-binding Rossmann-like Domain"/>
    <property type="match status" value="1"/>
</dbReference>
<dbReference type="Gene3D" id="3.30.1780.10">
    <property type="entry name" value="ornithine cyclodeaminase, domain 1"/>
    <property type="match status" value="1"/>
</dbReference>
<dbReference type="InterPro" id="IPR036291">
    <property type="entry name" value="NAD(P)-bd_dom_sf"/>
</dbReference>
<dbReference type="InterPro" id="IPR003462">
    <property type="entry name" value="ODC_Mu_crystall"/>
</dbReference>
<dbReference type="InterPro" id="IPR023401">
    <property type="entry name" value="ODC_N"/>
</dbReference>
<dbReference type="NCBIfam" id="NF006379">
    <property type="entry name" value="PRK08618.1"/>
    <property type="match status" value="1"/>
</dbReference>
<dbReference type="PANTHER" id="PTHR13812">
    <property type="entry name" value="KETIMINE REDUCTASE MU-CRYSTALLIN"/>
    <property type="match status" value="1"/>
</dbReference>
<dbReference type="PANTHER" id="PTHR13812:SF19">
    <property type="entry name" value="KETIMINE REDUCTASE MU-CRYSTALLIN"/>
    <property type="match status" value="1"/>
</dbReference>
<dbReference type="Pfam" id="PF02423">
    <property type="entry name" value="OCD_Mu_crystall"/>
    <property type="match status" value="1"/>
</dbReference>
<dbReference type="PIRSF" id="PIRSF001439">
    <property type="entry name" value="CryM"/>
    <property type="match status" value="1"/>
</dbReference>
<dbReference type="SUPFAM" id="SSF51735">
    <property type="entry name" value="NAD(P)-binding Rossmann-fold domains"/>
    <property type="match status" value="1"/>
</dbReference>
<proteinExistence type="evidence at protein level"/>
<comment type="function">
    <text evidence="1">Catalyzes the reduction of Delta(1)-pyrroline-2-carboxylate (Pyr2C) to L-proline, using preferentially NADPH over NADH as the electron donor. Is likely involved in a degradation pathway that converts trans-3-hydroxy-L-proline (t3LHyp) to L-proline.</text>
</comment>
<comment type="catalytic activity">
    <reaction evidence="1">
        <text>L-proline + NAD(+) = 1-pyrroline-2-carboxylate + NADH + H(+)</text>
        <dbReference type="Rhea" id="RHEA:20321"/>
        <dbReference type="ChEBI" id="CHEBI:15378"/>
        <dbReference type="ChEBI" id="CHEBI:39785"/>
        <dbReference type="ChEBI" id="CHEBI:57540"/>
        <dbReference type="ChEBI" id="CHEBI:57945"/>
        <dbReference type="ChEBI" id="CHEBI:60039"/>
        <dbReference type="EC" id="1.5.1.49"/>
    </reaction>
</comment>
<comment type="catalytic activity">
    <reaction evidence="1">
        <text>L-proline + NADP(+) = 1-pyrroline-2-carboxylate + NADPH + H(+)</text>
        <dbReference type="Rhea" id="RHEA:20317"/>
        <dbReference type="ChEBI" id="CHEBI:15378"/>
        <dbReference type="ChEBI" id="CHEBI:39785"/>
        <dbReference type="ChEBI" id="CHEBI:57783"/>
        <dbReference type="ChEBI" id="CHEBI:58349"/>
        <dbReference type="ChEBI" id="CHEBI:60039"/>
        <dbReference type="EC" id="1.5.1.49"/>
    </reaction>
</comment>
<comment type="biophysicochemical properties">
    <kinetics>
        <KM evidence="1">1.1 mM for Delta(1)-pyrroline-2-carboxylate (using NADPH as cosubstrate)</KM>
        <KM evidence="1">7.6 mM for Delta(1)-pyrroline-2-carboxylate (using NADH as cosubstrate)</KM>
        <text evidence="1">kcat is 15 sec(-1) for Pyr2C reduction using NADPH. kcat is 2.1 sec(-1) for Pyr2C reduction using NADH.</text>
    </kinetics>
</comment>
<comment type="similarity">
    <text evidence="3">Belongs to the ornithine cyclodeaminase/mu-crystallin family.</text>
</comment>
<feature type="chain" id="PRO_0000432299" description="Delta(1)-pyrroline-2-carboxylate reductase">
    <location>
        <begin position="1"/>
        <end position="325"/>
    </location>
</feature>
<reference key="1">
    <citation type="journal article" date="2004" name="Nucleic Acids Res.">
        <title>The genome sequence of Bacillus cereus ATCC 10987 reveals metabolic adaptations and a large plasmid related to Bacillus anthracis pXO1.</title>
        <authorList>
            <person name="Rasko D.A."/>
            <person name="Ravel J."/>
            <person name="Oekstad O.A."/>
            <person name="Helgason E."/>
            <person name="Cer R.Z."/>
            <person name="Jiang L."/>
            <person name="Shores K.A."/>
            <person name="Fouts D.E."/>
            <person name="Tourasse N.J."/>
            <person name="Angiuoli S.V."/>
            <person name="Kolonay J.F."/>
            <person name="Nelson W.C."/>
            <person name="Kolstoe A.-B."/>
            <person name="Fraser C.M."/>
            <person name="Read T.D."/>
        </authorList>
    </citation>
    <scope>NUCLEOTIDE SEQUENCE [LARGE SCALE GENOMIC DNA]</scope>
    <source>
        <strain>ATCC 10987 / NRS 248</strain>
    </source>
</reference>
<reference key="2">
    <citation type="journal article" date="2014" name="Elife">
        <title>Prediction and characterization of enzymatic activities guided by sequence similarity and genome neighborhood networks.</title>
        <authorList>
            <person name="Zhao S."/>
            <person name="Sakai A."/>
            <person name="Zhang X."/>
            <person name="Vetting M.W."/>
            <person name="Kumar R."/>
            <person name="Hillerich B."/>
            <person name="San Francisco B."/>
            <person name="Solbiati J."/>
            <person name="Steves A."/>
            <person name="Brown S."/>
            <person name="Akiva E."/>
            <person name="Barber A."/>
            <person name="Seidel R.D."/>
            <person name="Babbitt P.C."/>
            <person name="Almo S.C."/>
            <person name="Gerlt J.A."/>
            <person name="Jacobson M.P."/>
        </authorList>
    </citation>
    <scope>FUNCTION</scope>
    <scope>CATALYTIC ACTIVITY</scope>
    <scope>BIOPHYSICOCHEMICAL PROPERTIES</scope>
</reference>
<evidence type="ECO:0000269" key="1">
    <source>
    </source>
</evidence>
<evidence type="ECO:0000303" key="2">
    <source>
    </source>
</evidence>
<evidence type="ECO:0000305" key="3"/>
<evidence type="ECO:0000312" key="4">
    <source>
        <dbReference type="EMBL" id="AAS39926.1"/>
    </source>
</evidence>
<name>PY2CR_BACC1</name>
<sequence>MLVISANEQRNLVNMNEVIEYAALALKEFSAERTITPIRDSLPFANEQNTALIMPSVAEGLEALGLKVVTVVPENKKIGKKTINGIVMLSDFQTGEPLALLEGSYLTMIRTGALSGVATKHLARHNAKTLCIIGTGEQAKGIAEAVFAVRDIEKVILYNRTEEKAYAFSQYIQEKFNKPAYVYTSANEAISEADIIATTTNASTPVFSKKLQKGVHVNAVGSFRPSMQELPSHAIANATKVVVESKEAALEETGDLQVPIQEGLFKSSDIHAELGQIISGEKAGRESDEEVTVFKSVGLAVVDIIVAKYLYERAVERGVGERIEF</sequence>
<organism>
    <name type="scientific">Bacillus cereus (strain ATCC 10987 / NRS 248)</name>
    <dbReference type="NCBI Taxonomy" id="222523"/>
    <lineage>
        <taxon>Bacteria</taxon>
        <taxon>Bacillati</taxon>
        <taxon>Bacillota</taxon>
        <taxon>Bacilli</taxon>
        <taxon>Bacillales</taxon>
        <taxon>Bacillaceae</taxon>
        <taxon>Bacillus</taxon>
        <taxon>Bacillus cereus group</taxon>
    </lineage>
</organism>